<sequence>MSKVDVVDILKKSDALLEGHFLLSSGKHSNRYVQCAKVLRFPEYAAEVLSTVVEQIKDLDIDLVVGPAMGGVIVSYELGRQLGKEAVFTERKDNTMELRRGFEVKKGAKIIIAEDVVTTGKSTMETKRVLEALGGEVVGVACIADRTNHDIGMPIYSAIKLDIQVYESDECPLCKEGKLPVVKPGSREFKELGM</sequence>
<evidence type="ECO:0000255" key="1">
    <source>
        <dbReference type="HAMAP-Rule" id="MF_01208"/>
    </source>
</evidence>
<protein>
    <recommendedName>
        <fullName evidence="1">Orotate phosphoribosyltransferase</fullName>
        <shortName evidence="1">OPRT</shortName>
        <shortName evidence="1">OPRTase</shortName>
        <ecNumber evidence="1">2.4.2.10</ecNumber>
    </recommendedName>
</protein>
<name>PYRE_CLOD6</name>
<feature type="chain" id="PRO_1000138782" description="Orotate phosphoribosyltransferase">
    <location>
        <begin position="1"/>
        <end position="194"/>
    </location>
</feature>
<feature type="binding site" evidence="1">
    <location>
        <begin position="114"/>
        <end position="122"/>
    </location>
    <ligand>
        <name>5-phospho-alpha-D-ribose 1-diphosphate</name>
        <dbReference type="ChEBI" id="CHEBI:58017"/>
    </ligand>
</feature>
<feature type="binding site" evidence="1">
    <location>
        <position position="118"/>
    </location>
    <ligand>
        <name>orotate</name>
        <dbReference type="ChEBI" id="CHEBI:30839"/>
    </ligand>
</feature>
<feature type="binding site" evidence="1">
    <location>
        <position position="146"/>
    </location>
    <ligand>
        <name>orotate</name>
        <dbReference type="ChEBI" id="CHEBI:30839"/>
    </ligand>
</feature>
<gene>
    <name evidence="1" type="primary">pyrE</name>
    <name type="ordered locus">CD630_01870</name>
</gene>
<proteinExistence type="inferred from homology"/>
<comment type="function">
    <text evidence="1">Catalyzes the transfer of a ribosyl phosphate group from 5-phosphoribose 1-diphosphate to orotate, leading to the formation of orotidine monophosphate (OMP).</text>
</comment>
<comment type="catalytic activity">
    <reaction evidence="1">
        <text>orotidine 5'-phosphate + diphosphate = orotate + 5-phospho-alpha-D-ribose 1-diphosphate</text>
        <dbReference type="Rhea" id="RHEA:10380"/>
        <dbReference type="ChEBI" id="CHEBI:30839"/>
        <dbReference type="ChEBI" id="CHEBI:33019"/>
        <dbReference type="ChEBI" id="CHEBI:57538"/>
        <dbReference type="ChEBI" id="CHEBI:58017"/>
        <dbReference type="EC" id="2.4.2.10"/>
    </reaction>
</comment>
<comment type="cofactor">
    <cofactor evidence="1">
        <name>Mg(2+)</name>
        <dbReference type="ChEBI" id="CHEBI:18420"/>
    </cofactor>
</comment>
<comment type="pathway">
    <text evidence="1">Pyrimidine metabolism; UMP biosynthesis via de novo pathway; UMP from orotate: step 1/2.</text>
</comment>
<comment type="subunit">
    <text evidence="1">Homodimer.</text>
</comment>
<comment type="similarity">
    <text evidence="1">Belongs to the purine/pyrimidine phosphoribosyltransferase family. PyrE subfamily.</text>
</comment>
<accession>Q18CS5</accession>
<reference key="1">
    <citation type="journal article" date="2006" name="Nat. Genet.">
        <title>The multidrug-resistant human pathogen Clostridium difficile has a highly mobile, mosaic genome.</title>
        <authorList>
            <person name="Sebaihia M."/>
            <person name="Wren B.W."/>
            <person name="Mullany P."/>
            <person name="Fairweather N.F."/>
            <person name="Minton N."/>
            <person name="Stabler R."/>
            <person name="Thomson N.R."/>
            <person name="Roberts A.P."/>
            <person name="Cerdeno-Tarraga A.M."/>
            <person name="Wang H."/>
            <person name="Holden M.T.G."/>
            <person name="Wright A."/>
            <person name="Churcher C."/>
            <person name="Quail M.A."/>
            <person name="Baker S."/>
            <person name="Bason N."/>
            <person name="Brooks K."/>
            <person name="Chillingworth T."/>
            <person name="Cronin A."/>
            <person name="Davis P."/>
            <person name="Dowd L."/>
            <person name="Fraser A."/>
            <person name="Feltwell T."/>
            <person name="Hance Z."/>
            <person name="Holroyd S."/>
            <person name="Jagels K."/>
            <person name="Moule S."/>
            <person name="Mungall K."/>
            <person name="Price C."/>
            <person name="Rabbinowitsch E."/>
            <person name="Sharp S."/>
            <person name="Simmonds M."/>
            <person name="Stevens K."/>
            <person name="Unwin L."/>
            <person name="Whithead S."/>
            <person name="Dupuy B."/>
            <person name="Dougan G."/>
            <person name="Barrell B."/>
            <person name="Parkhill J."/>
        </authorList>
    </citation>
    <scope>NUCLEOTIDE SEQUENCE [LARGE SCALE GENOMIC DNA]</scope>
    <source>
        <strain>630</strain>
    </source>
</reference>
<organism>
    <name type="scientific">Clostridioides difficile (strain 630)</name>
    <name type="common">Peptoclostridium difficile</name>
    <dbReference type="NCBI Taxonomy" id="272563"/>
    <lineage>
        <taxon>Bacteria</taxon>
        <taxon>Bacillati</taxon>
        <taxon>Bacillota</taxon>
        <taxon>Clostridia</taxon>
        <taxon>Peptostreptococcales</taxon>
        <taxon>Peptostreptococcaceae</taxon>
        <taxon>Clostridioides</taxon>
    </lineage>
</organism>
<dbReference type="EC" id="2.4.2.10" evidence="1"/>
<dbReference type="EMBL" id="AM180355">
    <property type="protein sequence ID" value="CAJ67009.1"/>
    <property type="molecule type" value="Genomic_DNA"/>
</dbReference>
<dbReference type="RefSeq" id="WP_003420885.1">
    <property type="nucleotide sequence ID" value="NZ_JAUPES010000004.1"/>
</dbReference>
<dbReference type="RefSeq" id="YP_001086657.1">
    <property type="nucleotide sequence ID" value="NC_009089.1"/>
</dbReference>
<dbReference type="SMR" id="Q18CS5"/>
<dbReference type="STRING" id="272563.CD630_01870"/>
<dbReference type="EnsemblBacteria" id="CAJ67009">
    <property type="protein sequence ID" value="CAJ67009"/>
    <property type="gene ID" value="CD630_01870"/>
</dbReference>
<dbReference type="GeneID" id="66352736"/>
<dbReference type="KEGG" id="cdf:CD630_01870"/>
<dbReference type="KEGG" id="pdc:CDIF630_00308"/>
<dbReference type="PATRIC" id="fig|272563.120.peg.202"/>
<dbReference type="eggNOG" id="COG0461">
    <property type="taxonomic scope" value="Bacteria"/>
</dbReference>
<dbReference type="OrthoDB" id="9783570at2"/>
<dbReference type="PhylomeDB" id="Q18CS5"/>
<dbReference type="BioCyc" id="PDIF272563:G12WB-292-MONOMER"/>
<dbReference type="UniPathway" id="UPA00070">
    <property type="reaction ID" value="UER00119"/>
</dbReference>
<dbReference type="Proteomes" id="UP000001978">
    <property type="component" value="Chromosome"/>
</dbReference>
<dbReference type="GO" id="GO:0000287">
    <property type="term" value="F:magnesium ion binding"/>
    <property type="evidence" value="ECO:0007669"/>
    <property type="project" value="UniProtKB-UniRule"/>
</dbReference>
<dbReference type="GO" id="GO:0004588">
    <property type="term" value="F:orotate phosphoribosyltransferase activity"/>
    <property type="evidence" value="ECO:0007669"/>
    <property type="project" value="UniProtKB-UniRule"/>
</dbReference>
<dbReference type="GO" id="GO:0044205">
    <property type="term" value="P:'de novo' UMP biosynthetic process"/>
    <property type="evidence" value="ECO:0007669"/>
    <property type="project" value="UniProtKB-UniRule"/>
</dbReference>
<dbReference type="GO" id="GO:0019856">
    <property type="term" value="P:pyrimidine nucleobase biosynthetic process"/>
    <property type="evidence" value="ECO:0007669"/>
    <property type="project" value="InterPro"/>
</dbReference>
<dbReference type="CDD" id="cd06223">
    <property type="entry name" value="PRTases_typeI"/>
    <property type="match status" value="1"/>
</dbReference>
<dbReference type="Gene3D" id="3.40.50.2020">
    <property type="match status" value="1"/>
</dbReference>
<dbReference type="HAMAP" id="MF_01208">
    <property type="entry name" value="PyrE"/>
    <property type="match status" value="1"/>
</dbReference>
<dbReference type="InterPro" id="IPR023031">
    <property type="entry name" value="OPRT"/>
</dbReference>
<dbReference type="InterPro" id="IPR006273">
    <property type="entry name" value="Orotate_PRibTrfase_bac"/>
</dbReference>
<dbReference type="InterPro" id="IPR000836">
    <property type="entry name" value="PRibTrfase_dom"/>
</dbReference>
<dbReference type="InterPro" id="IPR029057">
    <property type="entry name" value="PRTase-like"/>
</dbReference>
<dbReference type="NCBIfam" id="TIGR01367">
    <property type="entry name" value="pyrE_Therm"/>
    <property type="match status" value="1"/>
</dbReference>
<dbReference type="PANTHER" id="PTHR19278">
    <property type="entry name" value="OROTATE PHOSPHORIBOSYLTRANSFERASE"/>
    <property type="match status" value="1"/>
</dbReference>
<dbReference type="PANTHER" id="PTHR19278:SF9">
    <property type="entry name" value="URIDINE 5'-MONOPHOSPHATE SYNTHASE"/>
    <property type="match status" value="1"/>
</dbReference>
<dbReference type="Pfam" id="PF00156">
    <property type="entry name" value="Pribosyltran"/>
    <property type="match status" value="1"/>
</dbReference>
<dbReference type="SUPFAM" id="SSF53271">
    <property type="entry name" value="PRTase-like"/>
    <property type="match status" value="1"/>
</dbReference>
<keyword id="KW-0328">Glycosyltransferase</keyword>
<keyword id="KW-0460">Magnesium</keyword>
<keyword id="KW-0665">Pyrimidine biosynthesis</keyword>
<keyword id="KW-1185">Reference proteome</keyword>
<keyword id="KW-0808">Transferase</keyword>